<evidence type="ECO:0000305" key="1"/>
<sequence>MAKAVTIKVKLVSSADTGFYYVAKKNSRTMTDKMVKKKYDPVARKHVEFREAKIK</sequence>
<proteinExistence type="inferred from homology"/>
<dbReference type="EMBL" id="CP000319">
    <property type="protein sequence ID" value="ABE63231.1"/>
    <property type="molecule type" value="Genomic_DNA"/>
</dbReference>
<dbReference type="RefSeq" id="WP_006611239.1">
    <property type="nucleotide sequence ID" value="NC_007964.1"/>
</dbReference>
<dbReference type="SMR" id="Q1QKL6"/>
<dbReference type="STRING" id="323097.Nham_2441"/>
<dbReference type="KEGG" id="nha:Nham_2441"/>
<dbReference type="eggNOG" id="COG0267">
    <property type="taxonomic scope" value="Bacteria"/>
</dbReference>
<dbReference type="HOGENOM" id="CLU_190949_1_1_5"/>
<dbReference type="OrthoDB" id="21586at2"/>
<dbReference type="Proteomes" id="UP000001953">
    <property type="component" value="Chromosome"/>
</dbReference>
<dbReference type="GO" id="GO:0022625">
    <property type="term" value="C:cytosolic large ribosomal subunit"/>
    <property type="evidence" value="ECO:0007669"/>
    <property type="project" value="TreeGrafter"/>
</dbReference>
<dbReference type="GO" id="GO:0003735">
    <property type="term" value="F:structural constituent of ribosome"/>
    <property type="evidence" value="ECO:0007669"/>
    <property type="project" value="InterPro"/>
</dbReference>
<dbReference type="GO" id="GO:0006412">
    <property type="term" value="P:translation"/>
    <property type="evidence" value="ECO:0007669"/>
    <property type="project" value="UniProtKB-UniRule"/>
</dbReference>
<dbReference type="FunFam" id="2.20.28.120:FF:000003">
    <property type="entry name" value="50S ribosomal protein L33"/>
    <property type="match status" value="1"/>
</dbReference>
<dbReference type="Gene3D" id="2.20.28.120">
    <property type="entry name" value="Ribosomal protein L33"/>
    <property type="match status" value="1"/>
</dbReference>
<dbReference type="InterPro" id="IPR001705">
    <property type="entry name" value="Ribosomal_bL33"/>
</dbReference>
<dbReference type="InterPro" id="IPR038584">
    <property type="entry name" value="Ribosomal_bL33_sf"/>
</dbReference>
<dbReference type="InterPro" id="IPR011332">
    <property type="entry name" value="Ribosomal_zn-bd"/>
</dbReference>
<dbReference type="NCBIfam" id="NF001860">
    <property type="entry name" value="PRK00595.1"/>
    <property type="match status" value="1"/>
</dbReference>
<dbReference type="NCBIfam" id="TIGR01023">
    <property type="entry name" value="rpmG_bact"/>
    <property type="match status" value="1"/>
</dbReference>
<dbReference type="PANTHER" id="PTHR15238">
    <property type="entry name" value="54S RIBOSOMAL PROTEIN L39, MITOCHONDRIAL"/>
    <property type="match status" value="1"/>
</dbReference>
<dbReference type="PANTHER" id="PTHR15238:SF1">
    <property type="entry name" value="LARGE RIBOSOMAL SUBUNIT PROTEIN BL33M"/>
    <property type="match status" value="1"/>
</dbReference>
<dbReference type="Pfam" id="PF00471">
    <property type="entry name" value="Ribosomal_L33"/>
    <property type="match status" value="1"/>
</dbReference>
<dbReference type="SUPFAM" id="SSF57829">
    <property type="entry name" value="Zn-binding ribosomal proteins"/>
    <property type="match status" value="1"/>
</dbReference>
<keyword id="KW-1185">Reference proteome</keyword>
<keyword id="KW-0687">Ribonucleoprotein</keyword>
<keyword id="KW-0689">Ribosomal protein</keyword>
<comment type="similarity">
    <text evidence="1">Belongs to the bacterial ribosomal protein bL33 family.</text>
</comment>
<protein>
    <recommendedName>
        <fullName evidence="1">Large ribosomal subunit protein bL33</fullName>
    </recommendedName>
    <alternativeName>
        <fullName>50S ribosomal protein L33</fullName>
    </alternativeName>
</protein>
<accession>Q1QKL6</accession>
<name>RL33_NITHX</name>
<feature type="chain" id="PRO_0000356586" description="Large ribosomal subunit protein bL33">
    <location>
        <begin position="1"/>
        <end position="55"/>
    </location>
</feature>
<organism>
    <name type="scientific">Nitrobacter hamburgensis (strain DSM 10229 / NCIMB 13809 / X14)</name>
    <dbReference type="NCBI Taxonomy" id="323097"/>
    <lineage>
        <taxon>Bacteria</taxon>
        <taxon>Pseudomonadati</taxon>
        <taxon>Pseudomonadota</taxon>
        <taxon>Alphaproteobacteria</taxon>
        <taxon>Hyphomicrobiales</taxon>
        <taxon>Nitrobacteraceae</taxon>
        <taxon>Nitrobacter</taxon>
    </lineage>
</organism>
<gene>
    <name type="primary">rpmG</name>
    <name type="ordered locus">Nham_2441</name>
</gene>
<reference key="1">
    <citation type="submission" date="2006-03" db="EMBL/GenBank/DDBJ databases">
        <title>Complete sequence of chromosome of Nitrobacter hamburgensis X14.</title>
        <authorList>
            <consortium name="US DOE Joint Genome Institute"/>
            <person name="Copeland A."/>
            <person name="Lucas S."/>
            <person name="Lapidus A."/>
            <person name="Barry K."/>
            <person name="Detter J.C."/>
            <person name="Glavina del Rio T."/>
            <person name="Hammon N."/>
            <person name="Israni S."/>
            <person name="Dalin E."/>
            <person name="Tice H."/>
            <person name="Pitluck S."/>
            <person name="Chain P."/>
            <person name="Malfatti S."/>
            <person name="Shin M."/>
            <person name="Vergez L."/>
            <person name="Schmutz J."/>
            <person name="Larimer F."/>
            <person name="Land M."/>
            <person name="Hauser L."/>
            <person name="Kyrpides N."/>
            <person name="Ivanova N."/>
            <person name="Ward B."/>
            <person name="Arp D."/>
            <person name="Klotz M."/>
            <person name="Stein L."/>
            <person name="O'Mullan G."/>
            <person name="Starkenburg S."/>
            <person name="Sayavedra L."/>
            <person name="Poret-Peterson A.T."/>
            <person name="Gentry M.E."/>
            <person name="Bruce D."/>
            <person name="Richardson P."/>
        </authorList>
    </citation>
    <scope>NUCLEOTIDE SEQUENCE [LARGE SCALE GENOMIC DNA]</scope>
    <source>
        <strain>DSM 10229 / NCIMB 13809 / X14</strain>
    </source>
</reference>